<protein>
    <recommendedName>
        <fullName evidence="9">FAD-dependent monooxygenase ausM</fullName>
        <ecNumber evidence="9">1.-.-.-</ecNumber>
    </recommendedName>
    <alternativeName>
        <fullName evidence="8">Austinoid biosynthesis clusters protein M</fullName>
    </alternativeName>
</protein>
<gene>
    <name evidence="8" type="primary">ausM</name>
    <name type="ORF">AN11206</name>
</gene>
<evidence type="ECO:0000250" key="1">
    <source>
        <dbReference type="UniProtKB" id="B8M9J8"/>
    </source>
</evidence>
<evidence type="ECO:0000255" key="2"/>
<evidence type="ECO:0000255" key="3">
    <source>
        <dbReference type="PROSITE-ProRule" id="PRU00498"/>
    </source>
</evidence>
<evidence type="ECO:0000269" key="4">
    <source>
    </source>
</evidence>
<evidence type="ECO:0000269" key="5">
    <source>
    </source>
</evidence>
<evidence type="ECO:0000269" key="6">
    <source>
    </source>
</evidence>
<evidence type="ECO:0000269" key="7">
    <source>
    </source>
</evidence>
<evidence type="ECO:0000303" key="8">
    <source>
    </source>
</evidence>
<evidence type="ECO:0000305" key="9"/>
<evidence type="ECO:0000305" key="10">
    <source>
    </source>
</evidence>
<dbReference type="EC" id="1.-.-.-" evidence="9"/>
<dbReference type="EMBL" id="BN001308">
    <property type="protein sequence ID" value="CBF87267.1"/>
    <property type="molecule type" value="Genomic_DNA"/>
</dbReference>
<dbReference type="RefSeq" id="XP_682527.1">
    <property type="nucleotide sequence ID" value="XM_677435.1"/>
</dbReference>
<dbReference type="SMR" id="C8VQ98"/>
<dbReference type="STRING" id="227321.C8VQ98"/>
<dbReference type="GlyCosmos" id="C8VQ98">
    <property type="glycosylation" value="1 site, No reported glycans"/>
</dbReference>
<dbReference type="EnsemblFungi" id="CBF87267">
    <property type="protein sequence ID" value="CBF87267"/>
    <property type="gene ID" value="ANIA_11206"/>
</dbReference>
<dbReference type="KEGG" id="ani:ANIA_11206"/>
<dbReference type="VEuPathDB" id="FungiDB:AN11206"/>
<dbReference type="eggNOG" id="KOG2614">
    <property type="taxonomic scope" value="Eukaryota"/>
</dbReference>
<dbReference type="HOGENOM" id="CLU_009665_12_2_1"/>
<dbReference type="InParanoid" id="C8VQ98"/>
<dbReference type="OMA" id="SIGLWPN"/>
<dbReference type="OrthoDB" id="10029326at2759"/>
<dbReference type="UniPathway" id="UPA00213"/>
<dbReference type="Proteomes" id="UP000000560">
    <property type="component" value="Chromosome VIII"/>
</dbReference>
<dbReference type="GO" id="GO:0016020">
    <property type="term" value="C:membrane"/>
    <property type="evidence" value="ECO:0007669"/>
    <property type="project" value="UniProtKB-SubCell"/>
</dbReference>
<dbReference type="GO" id="GO:0071949">
    <property type="term" value="F:FAD binding"/>
    <property type="evidence" value="ECO:0007669"/>
    <property type="project" value="InterPro"/>
</dbReference>
<dbReference type="GO" id="GO:0004497">
    <property type="term" value="F:monooxygenase activity"/>
    <property type="evidence" value="ECO:0007669"/>
    <property type="project" value="UniProtKB-KW"/>
</dbReference>
<dbReference type="GO" id="GO:1900560">
    <property type="term" value="P:austinol biosynthetic process"/>
    <property type="evidence" value="ECO:0000315"/>
    <property type="project" value="AspGD"/>
</dbReference>
<dbReference type="GO" id="GO:1900563">
    <property type="term" value="P:dehydroaustinol biosynthetic process"/>
    <property type="evidence" value="ECO:0000315"/>
    <property type="project" value="AspGD"/>
</dbReference>
<dbReference type="GO" id="GO:0044550">
    <property type="term" value="P:secondary metabolite biosynthetic process"/>
    <property type="evidence" value="ECO:0000318"/>
    <property type="project" value="GO_Central"/>
</dbReference>
<dbReference type="GO" id="GO:0016114">
    <property type="term" value="P:terpenoid biosynthetic process"/>
    <property type="evidence" value="ECO:0007669"/>
    <property type="project" value="UniProtKB-UniPathway"/>
</dbReference>
<dbReference type="FunFam" id="3.50.50.60:FF:000578">
    <property type="entry name" value="FAD-dependent monooxygenase ausM"/>
    <property type="match status" value="1"/>
</dbReference>
<dbReference type="Gene3D" id="3.50.50.60">
    <property type="entry name" value="FAD/NAD(P)-binding domain"/>
    <property type="match status" value="1"/>
</dbReference>
<dbReference type="InterPro" id="IPR002938">
    <property type="entry name" value="FAD-bd"/>
</dbReference>
<dbReference type="InterPro" id="IPR036188">
    <property type="entry name" value="FAD/NAD-bd_sf"/>
</dbReference>
<dbReference type="InterPro" id="IPR050562">
    <property type="entry name" value="FAD_mOase_fung"/>
</dbReference>
<dbReference type="PANTHER" id="PTHR47356:SF2">
    <property type="entry name" value="FAD-BINDING DOMAIN-CONTAINING PROTEIN-RELATED"/>
    <property type="match status" value="1"/>
</dbReference>
<dbReference type="PANTHER" id="PTHR47356">
    <property type="entry name" value="FAD-DEPENDENT MONOOXYGENASE ASQG-RELATED"/>
    <property type="match status" value="1"/>
</dbReference>
<dbReference type="Pfam" id="PF01494">
    <property type="entry name" value="FAD_binding_3"/>
    <property type="match status" value="2"/>
</dbReference>
<dbReference type="PRINTS" id="PR00420">
    <property type="entry name" value="RNGMNOXGNASE"/>
</dbReference>
<dbReference type="SUPFAM" id="SSF51905">
    <property type="entry name" value="FAD/NAD(P)-binding domain"/>
    <property type="match status" value="1"/>
</dbReference>
<feature type="chain" id="PRO_0000436494" description="FAD-dependent monooxygenase ausM">
    <location>
        <begin position="1"/>
        <end position="479"/>
    </location>
</feature>
<feature type="transmembrane region" description="Helical" evidence="2">
    <location>
        <begin position="449"/>
        <end position="469"/>
    </location>
</feature>
<feature type="active site" evidence="1">
    <location>
        <position position="224"/>
    </location>
</feature>
<feature type="binding site" evidence="1">
    <location>
        <position position="40"/>
    </location>
    <ligand>
        <name>FAD</name>
        <dbReference type="ChEBI" id="CHEBI:57692"/>
    </ligand>
</feature>
<feature type="binding site" evidence="1">
    <location>
        <position position="54"/>
    </location>
    <ligand>
        <name>FAD</name>
        <dbReference type="ChEBI" id="CHEBI:57692"/>
    </ligand>
</feature>
<feature type="binding site" evidence="1">
    <location>
        <position position="113"/>
    </location>
    <ligand>
        <name>FAD</name>
        <dbReference type="ChEBI" id="CHEBI:57692"/>
    </ligand>
</feature>
<feature type="binding site" evidence="1">
    <location>
        <position position="316"/>
    </location>
    <ligand>
        <name>FAD</name>
        <dbReference type="ChEBI" id="CHEBI:57692"/>
    </ligand>
</feature>
<feature type="binding site" evidence="1">
    <location>
        <position position="329"/>
    </location>
    <ligand>
        <name>FAD</name>
        <dbReference type="ChEBI" id="CHEBI:57692"/>
    </ligand>
</feature>
<feature type="glycosylation site" description="N-linked (GlcNAc...) asparagine" evidence="3">
    <location>
        <position position="289"/>
    </location>
</feature>
<sequence length="479" mass="53183">MSDTPTRKTDLRVIIVGGSVAGLTLAHCLANANIDHIVLEKRAEISPQEGAFLGIWPNGGRIFDQLGVYADLEKCTVPIHKMRVRFPDGVSFSSELPRQVQERFGYPIISLDRQKVLEILYNRYPAKSNIHVNKKVTEIRQTEREAQVLTADGAVYKGDLVVGADGIHSAVRAEMWRQAKDLVGRRDRQDVNHEIAAFTVEYACVFGISSPISGLESGEHVNSYSNGLCVITFHGKDGRVFWFILIKLQKRFIYPFTPRFSASDAAKICAEYANVPVWGDICVRDLWGNKTSVSMTALEEGLLETWRFKRVVLLGDSIHKMTPNIGQGANTAAEDAGVLASLLQRLSTSDSSATSCTIDAVLQEYASLRYERVKSTYQRAYFGARLHTRDDALKAFVGRYIFPRFRQQVLERTSQAIAGAPQVDFLPTPKRTGPGWSDYAGSPEVGAPTLPWLVISLPVLASMLCYLVYSSVFVTPIFP</sequence>
<comment type="function">
    <text evidence="4 5 6 7">FAD-dependent monooxygenase; part of the gene cluster B that mediates the biosynthesis of austinol and dehydroaustinol, two fungal meroterpenoids (PubMed:22329759). The first step of the pathway is the synthesis of 3,5-dimethylorsellinic acid by the polyketide synthase ausA (PubMed:22329759). 3,5-dimethylorsellinic acid is then prenylated by the polyprenyl transferase ausN (PubMed:22329759). Further epoxidation by the FAD-dependent monooxygenase ausM and cyclization by the probable terpene cyclase ausL lead to the formation of protoaustinoid A (PubMed:22329759). Protoaustinoid A is then oxidized to spiro-lactone preaustinoid A3 by the combined action of the FAD-binding monooxygenases ausB and ausC, and the dioxygenase ausE (PubMed:22329759, PubMed:23865690). Acid-catalyzed keto-rearrangement and ring contraction of the tetraketide portion of preaustinoid A3 by ausJ lead to the formation of preaustinoid A4 (PubMed:22329759). The aldo-keto reductase ausK, with the help of ausH, is involved in the next step by transforming preaustinoid A4 into isoaustinone which is in turn hydroxylated by the P450 monooxygenase ausI to form austinolide (PubMed:22329759). Finally, the cytochrome P450 monooxygenase ausG modifies austinolide to austinol (PubMed:22329759). Austinol can be further modified to dehydroaustinol which forms a diffusible complex with diorcinol that initiates conidiation (PubMed:22234162, PubMed:22329759). Due to genetic rearrangements of the clusters and the subsequent loss of some enzymes, the end products of the Emericella nidulans austinoid biosynthesis clusters are austinol and dehydroaustinol, even if additional enzymes, such as the O-acetyltransferase ausQ and the cytochrome P450 monooxygenase ausR are still functional (PubMed:29076725).</text>
</comment>
<comment type="cofactor">
    <cofactor evidence="9">
        <name>FAD</name>
        <dbReference type="ChEBI" id="CHEBI:57692"/>
    </cofactor>
</comment>
<comment type="pathway">
    <text evidence="5">Secondary metabolite biosynthesis; terpenoid biosynthesis.</text>
</comment>
<comment type="subcellular location">
    <subcellularLocation>
        <location evidence="2">Membrane</location>
        <topology evidence="2">Single-pass membrane protein</topology>
    </subcellularLocation>
</comment>
<comment type="disruption phenotype">
    <text evidence="5">Impairs the synthesis of austinol and dehydroaustinol (PubMed:22329759).</text>
</comment>
<comment type="miscellaneous">
    <text evidence="10">In A.calidoustus, the austinoid gene cluster lies on a contiguous DNA region, while clusters from E.nidulans and P.brasilianum are split in their respective genomes. Genetic rearrangements provoked variability among the clusters and E.nidulans produces the least number of austionoid derivatives with the end products austinol and dehydroaustinol, while P.brasilianum can produce until acetoxydehydroaustin, and A.calidoustus produces the highest number of identified derivatives.</text>
</comment>
<comment type="similarity">
    <text evidence="9">Belongs to the paxM FAD-dependent monooxygenase family.</text>
</comment>
<reference key="1">
    <citation type="journal article" date="2005" name="Nature">
        <title>Sequencing of Aspergillus nidulans and comparative analysis with A. fumigatus and A. oryzae.</title>
        <authorList>
            <person name="Galagan J.E."/>
            <person name="Calvo S.E."/>
            <person name="Cuomo C."/>
            <person name="Ma L.-J."/>
            <person name="Wortman J.R."/>
            <person name="Batzoglou S."/>
            <person name="Lee S.-I."/>
            <person name="Bastuerkmen M."/>
            <person name="Spevak C.C."/>
            <person name="Clutterbuck J."/>
            <person name="Kapitonov V."/>
            <person name="Jurka J."/>
            <person name="Scazzocchio C."/>
            <person name="Farman M.L."/>
            <person name="Butler J."/>
            <person name="Purcell S."/>
            <person name="Harris S."/>
            <person name="Braus G.H."/>
            <person name="Draht O."/>
            <person name="Busch S."/>
            <person name="D'Enfert C."/>
            <person name="Bouchier C."/>
            <person name="Goldman G.H."/>
            <person name="Bell-Pedersen D."/>
            <person name="Griffiths-Jones S."/>
            <person name="Doonan J.H."/>
            <person name="Yu J."/>
            <person name="Vienken K."/>
            <person name="Pain A."/>
            <person name="Freitag M."/>
            <person name="Selker E.U."/>
            <person name="Archer D.B."/>
            <person name="Penalva M.A."/>
            <person name="Oakley B.R."/>
            <person name="Momany M."/>
            <person name="Tanaka T."/>
            <person name="Kumagai T."/>
            <person name="Asai K."/>
            <person name="Machida M."/>
            <person name="Nierman W.C."/>
            <person name="Denning D.W."/>
            <person name="Caddick M.X."/>
            <person name="Hynes M."/>
            <person name="Paoletti M."/>
            <person name="Fischer R."/>
            <person name="Miller B.L."/>
            <person name="Dyer P.S."/>
            <person name="Sachs M.S."/>
            <person name="Osmani S.A."/>
            <person name="Birren B.W."/>
        </authorList>
    </citation>
    <scope>NUCLEOTIDE SEQUENCE [LARGE SCALE GENOMIC DNA]</scope>
    <source>
        <strain>FGSC A4 / ATCC 38163 / CBS 112.46 / NRRL 194 / M139</strain>
    </source>
</reference>
<reference key="2">
    <citation type="journal article" date="2009" name="Fungal Genet. Biol.">
        <title>The 2008 update of the Aspergillus nidulans genome annotation: a community effort.</title>
        <authorList>
            <person name="Wortman J.R."/>
            <person name="Gilsenan J.M."/>
            <person name="Joardar V."/>
            <person name="Deegan J."/>
            <person name="Clutterbuck J."/>
            <person name="Andersen M.R."/>
            <person name="Archer D."/>
            <person name="Bencina M."/>
            <person name="Braus G."/>
            <person name="Coutinho P."/>
            <person name="von Dohren H."/>
            <person name="Doonan J."/>
            <person name="Driessen A.J."/>
            <person name="Durek P."/>
            <person name="Espeso E."/>
            <person name="Fekete E."/>
            <person name="Flipphi M."/>
            <person name="Estrada C.G."/>
            <person name="Geysens S."/>
            <person name="Goldman G."/>
            <person name="de Groot P.W."/>
            <person name="Hansen K."/>
            <person name="Harris S.D."/>
            <person name="Heinekamp T."/>
            <person name="Helmstaedt K."/>
            <person name="Henrissat B."/>
            <person name="Hofmann G."/>
            <person name="Homan T."/>
            <person name="Horio T."/>
            <person name="Horiuchi H."/>
            <person name="James S."/>
            <person name="Jones M."/>
            <person name="Karaffa L."/>
            <person name="Karanyi Z."/>
            <person name="Kato M."/>
            <person name="Keller N."/>
            <person name="Kelly D.E."/>
            <person name="Kiel J.A."/>
            <person name="Kim J.M."/>
            <person name="van der Klei I.J."/>
            <person name="Klis F.M."/>
            <person name="Kovalchuk A."/>
            <person name="Krasevec N."/>
            <person name="Kubicek C.P."/>
            <person name="Liu B."/>
            <person name="Maccabe A."/>
            <person name="Meyer V."/>
            <person name="Mirabito P."/>
            <person name="Miskei M."/>
            <person name="Mos M."/>
            <person name="Mullins J."/>
            <person name="Nelson D.R."/>
            <person name="Nielsen J."/>
            <person name="Oakley B.R."/>
            <person name="Osmani S.A."/>
            <person name="Pakula T."/>
            <person name="Paszewski A."/>
            <person name="Paulsen I."/>
            <person name="Pilsyk S."/>
            <person name="Pocsi I."/>
            <person name="Punt P.J."/>
            <person name="Ram A.F."/>
            <person name="Ren Q."/>
            <person name="Robellet X."/>
            <person name="Robson G."/>
            <person name="Seiboth B."/>
            <person name="van Solingen P."/>
            <person name="Specht T."/>
            <person name="Sun J."/>
            <person name="Taheri-Talesh N."/>
            <person name="Takeshita N."/>
            <person name="Ussery D."/>
            <person name="vanKuyk P.A."/>
            <person name="Visser H."/>
            <person name="van de Vondervoort P.J."/>
            <person name="de Vries R.P."/>
            <person name="Walton J."/>
            <person name="Xiang X."/>
            <person name="Xiong Y."/>
            <person name="Zeng A.P."/>
            <person name="Brandt B.W."/>
            <person name="Cornell M.J."/>
            <person name="van den Hondel C.A."/>
            <person name="Visser J."/>
            <person name="Oliver S.G."/>
            <person name="Turner G."/>
        </authorList>
    </citation>
    <scope>GENOME REANNOTATION</scope>
    <source>
        <strain>FGSC A4 / ATCC 38163 / CBS 112.46 / NRRL 194 / M139</strain>
    </source>
</reference>
<reference key="3">
    <citation type="journal article" date="2012" name="ACS Chem. Biol.">
        <title>Signaling the induction of sporulation involves the interaction of two secondary metabolites in Aspergillus nidulans.</title>
        <authorList>
            <person name="Rodriguez-Urra A.B."/>
            <person name="Jimenez C."/>
            <person name="Nieto M.I."/>
            <person name="Rodriguez J."/>
            <person name="Hayashi H."/>
            <person name="Ugalde U."/>
        </authorList>
    </citation>
    <scope>FUNCTION</scope>
</reference>
<reference key="4">
    <citation type="journal article" date="2012" name="J. Am. Chem. Soc.">
        <title>Two separate gene clusters encode the biosynthetic pathway for the meroterpenoids austinol and dehydroaustinol in Aspergillus nidulans.</title>
        <authorList>
            <person name="Lo H.C."/>
            <person name="Entwistle R."/>
            <person name="Guo C.J."/>
            <person name="Ahuja M."/>
            <person name="Szewczyk E."/>
            <person name="Hung J.H."/>
            <person name="Chiang Y.M."/>
            <person name="Oakley B.R."/>
            <person name="Wang C.C."/>
        </authorList>
    </citation>
    <scope>FUNCTION</scope>
    <scope>DISRUPTION PHENOTYPE</scope>
</reference>
<reference key="5">
    <citation type="journal article" date="2013" name="J. Am. Chem. Soc.">
        <title>Spiro-ring formation is catalyzed by a multifunctional dioxygenase in austinol biosynthesis.</title>
        <authorList>
            <person name="Matsuda Y."/>
            <person name="Awakawa T."/>
            <person name="Wakimoto T."/>
            <person name="Abe I."/>
        </authorList>
    </citation>
    <scope>FUNCTION</scope>
</reference>
<reference key="6">
    <citation type="journal article" date="2017" name="ACS Chem. Biol.">
        <title>Rewiring of the austinoid biosynthetic pathway in filamentous fungi.</title>
        <authorList>
            <person name="Mattern D.J."/>
            <person name="Valiante V."/>
            <person name="Horn F."/>
            <person name="Petzke L."/>
            <person name="Brakhage A.A."/>
        </authorList>
    </citation>
    <scope>FUNCTION</scope>
</reference>
<accession>C8VQ98</accession>
<proteinExistence type="inferred from homology"/>
<organism>
    <name type="scientific">Emericella nidulans (strain FGSC A4 / ATCC 38163 / CBS 112.46 / NRRL 194 / M139)</name>
    <name type="common">Aspergillus nidulans</name>
    <dbReference type="NCBI Taxonomy" id="227321"/>
    <lineage>
        <taxon>Eukaryota</taxon>
        <taxon>Fungi</taxon>
        <taxon>Dikarya</taxon>
        <taxon>Ascomycota</taxon>
        <taxon>Pezizomycotina</taxon>
        <taxon>Eurotiomycetes</taxon>
        <taxon>Eurotiomycetidae</taxon>
        <taxon>Eurotiales</taxon>
        <taxon>Aspergillaceae</taxon>
        <taxon>Aspergillus</taxon>
        <taxon>Aspergillus subgen. Nidulantes</taxon>
    </lineage>
</organism>
<name>AUSM_EMENI</name>
<keyword id="KW-0274">FAD</keyword>
<keyword id="KW-0285">Flavoprotein</keyword>
<keyword id="KW-0325">Glycoprotein</keyword>
<keyword id="KW-0472">Membrane</keyword>
<keyword id="KW-0503">Monooxygenase</keyword>
<keyword id="KW-0560">Oxidoreductase</keyword>
<keyword id="KW-1185">Reference proteome</keyword>
<keyword id="KW-0812">Transmembrane</keyword>
<keyword id="KW-1133">Transmembrane helix</keyword>